<name>Y1858_BORPD</name>
<feature type="chain" id="PRO_1000143705" description="UPF0391 membrane protein Bpet1858">
    <location>
        <begin position="1"/>
        <end position="54"/>
    </location>
</feature>
<feature type="transmembrane region" description="Helical" evidence="1">
    <location>
        <begin position="5"/>
        <end position="25"/>
    </location>
</feature>
<feature type="transmembrane region" description="Helical" evidence="1">
    <location>
        <begin position="27"/>
        <end position="47"/>
    </location>
</feature>
<accession>A9IJC7</accession>
<dbReference type="EMBL" id="AM902716">
    <property type="protein sequence ID" value="CAP42197.1"/>
    <property type="molecule type" value="Genomic_DNA"/>
</dbReference>
<dbReference type="KEGG" id="bpt:Bpet1858"/>
<dbReference type="eggNOG" id="COG5487">
    <property type="taxonomic scope" value="Bacteria"/>
</dbReference>
<dbReference type="Proteomes" id="UP000001225">
    <property type="component" value="Chromosome"/>
</dbReference>
<dbReference type="GO" id="GO:0005886">
    <property type="term" value="C:plasma membrane"/>
    <property type="evidence" value="ECO:0007669"/>
    <property type="project" value="UniProtKB-SubCell"/>
</dbReference>
<dbReference type="HAMAP" id="MF_01361">
    <property type="entry name" value="UPF0391"/>
    <property type="match status" value="1"/>
</dbReference>
<dbReference type="InterPro" id="IPR009760">
    <property type="entry name" value="DUF1328"/>
</dbReference>
<dbReference type="NCBIfam" id="NF010226">
    <property type="entry name" value="PRK13682.1-1"/>
    <property type="match status" value="1"/>
</dbReference>
<dbReference type="NCBIfam" id="NF010228">
    <property type="entry name" value="PRK13682.1-3"/>
    <property type="match status" value="1"/>
</dbReference>
<dbReference type="NCBIfam" id="NF010229">
    <property type="entry name" value="PRK13682.1-4"/>
    <property type="match status" value="1"/>
</dbReference>
<dbReference type="Pfam" id="PF07043">
    <property type="entry name" value="DUF1328"/>
    <property type="match status" value="1"/>
</dbReference>
<dbReference type="PIRSF" id="PIRSF036466">
    <property type="entry name" value="UCP036466"/>
    <property type="match status" value="1"/>
</dbReference>
<comment type="subcellular location">
    <subcellularLocation>
        <location evidence="1">Cell membrane</location>
        <topology evidence="1">Multi-pass membrane protein</topology>
    </subcellularLocation>
</comment>
<comment type="similarity">
    <text evidence="1">Belongs to the UPF0391 family.</text>
</comment>
<reference key="1">
    <citation type="journal article" date="2008" name="BMC Genomics">
        <title>The missing link: Bordetella petrii is endowed with both the metabolic versatility of environmental bacteria and virulence traits of pathogenic Bordetellae.</title>
        <authorList>
            <person name="Gross R."/>
            <person name="Guzman C.A."/>
            <person name="Sebaihia M."/>
            <person name="Martin dos Santos V.A.P."/>
            <person name="Pieper D.H."/>
            <person name="Koebnik R."/>
            <person name="Lechner M."/>
            <person name="Bartels D."/>
            <person name="Buhrmester J."/>
            <person name="Choudhuri J.V."/>
            <person name="Ebensen T."/>
            <person name="Gaigalat L."/>
            <person name="Herrmann S."/>
            <person name="Khachane A.N."/>
            <person name="Larisch C."/>
            <person name="Link S."/>
            <person name="Linke B."/>
            <person name="Meyer F."/>
            <person name="Mormann S."/>
            <person name="Nakunst D."/>
            <person name="Rueckert C."/>
            <person name="Schneiker-Bekel S."/>
            <person name="Schulze K."/>
            <person name="Voerholter F.-J."/>
            <person name="Yevsa T."/>
            <person name="Engle J.T."/>
            <person name="Goldman W.E."/>
            <person name="Puehler A."/>
            <person name="Goebel U.B."/>
            <person name="Goesmann A."/>
            <person name="Bloecker H."/>
            <person name="Kaiser O."/>
            <person name="Martinez-Arias R."/>
        </authorList>
    </citation>
    <scope>NUCLEOTIDE SEQUENCE [LARGE SCALE GENOMIC DNA]</scope>
    <source>
        <strain>ATCC BAA-461 / DSM 12804 / CCUG 43448</strain>
    </source>
</reference>
<organism>
    <name type="scientific">Bordetella petrii (strain ATCC BAA-461 / DSM 12804 / CCUG 43448)</name>
    <dbReference type="NCBI Taxonomy" id="340100"/>
    <lineage>
        <taxon>Bacteria</taxon>
        <taxon>Pseudomonadati</taxon>
        <taxon>Pseudomonadota</taxon>
        <taxon>Betaproteobacteria</taxon>
        <taxon>Burkholderiales</taxon>
        <taxon>Alcaligenaceae</taxon>
        <taxon>Bordetella</taxon>
    </lineage>
</organism>
<protein>
    <recommendedName>
        <fullName evidence="1">UPF0391 membrane protein Bpet1858</fullName>
    </recommendedName>
</protein>
<keyword id="KW-1003">Cell membrane</keyword>
<keyword id="KW-0472">Membrane</keyword>
<keyword id="KW-0812">Transmembrane</keyword>
<keyword id="KW-1133">Transmembrane helix</keyword>
<gene>
    <name type="ordered locus">Bpet1858</name>
</gene>
<evidence type="ECO:0000255" key="1">
    <source>
        <dbReference type="HAMAP-Rule" id="MF_01361"/>
    </source>
</evidence>
<proteinExistence type="inferred from homology"/>
<sequence length="54" mass="5651">MLYYAVVFFVIAIIAAVLGFGGIAAGAAGIAKILFFVFLILALLSILSGAFRKK</sequence>